<feature type="chain" id="PRO_1000088153" description="7-cyano-7-deazaguanine synthase">
    <location>
        <begin position="1"/>
        <end position="228"/>
    </location>
</feature>
<feature type="binding site" evidence="1">
    <location>
        <begin position="9"/>
        <end position="19"/>
    </location>
    <ligand>
        <name>ATP</name>
        <dbReference type="ChEBI" id="CHEBI:30616"/>
    </ligand>
</feature>
<feature type="binding site" evidence="1">
    <location>
        <position position="189"/>
    </location>
    <ligand>
        <name>Zn(2+)</name>
        <dbReference type="ChEBI" id="CHEBI:29105"/>
    </ligand>
</feature>
<feature type="binding site" evidence="1">
    <location>
        <position position="199"/>
    </location>
    <ligand>
        <name>Zn(2+)</name>
        <dbReference type="ChEBI" id="CHEBI:29105"/>
    </ligand>
</feature>
<feature type="binding site" evidence="1">
    <location>
        <position position="202"/>
    </location>
    <ligand>
        <name>Zn(2+)</name>
        <dbReference type="ChEBI" id="CHEBI:29105"/>
    </ligand>
</feature>
<feature type="binding site" evidence="1">
    <location>
        <position position="205"/>
    </location>
    <ligand>
        <name>Zn(2+)</name>
        <dbReference type="ChEBI" id="CHEBI:29105"/>
    </ligand>
</feature>
<accession>A5G8S2</accession>
<dbReference type="EC" id="6.3.4.20" evidence="1"/>
<dbReference type="EMBL" id="CP000698">
    <property type="protein sequence ID" value="ABQ28190.1"/>
    <property type="molecule type" value="Genomic_DNA"/>
</dbReference>
<dbReference type="RefSeq" id="WP_011940827.1">
    <property type="nucleotide sequence ID" value="NC_009483.1"/>
</dbReference>
<dbReference type="SMR" id="A5G8S2"/>
<dbReference type="STRING" id="351605.Gura_4046"/>
<dbReference type="KEGG" id="gur:Gura_4046"/>
<dbReference type="HOGENOM" id="CLU_081854_1_1_7"/>
<dbReference type="OrthoDB" id="9789567at2"/>
<dbReference type="UniPathway" id="UPA00391"/>
<dbReference type="Proteomes" id="UP000006695">
    <property type="component" value="Chromosome"/>
</dbReference>
<dbReference type="GO" id="GO:0005524">
    <property type="term" value="F:ATP binding"/>
    <property type="evidence" value="ECO:0007669"/>
    <property type="project" value="UniProtKB-UniRule"/>
</dbReference>
<dbReference type="GO" id="GO:0016879">
    <property type="term" value="F:ligase activity, forming carbon-nitrogen bonds"/>
    <property type="evidence" value="ECO:0007669"/>
    <property type="project" value="UniProtKB-UniRule"/>
</dbReference>
<dbReference type="GO" id="GO:0008270">
    <property type="term" value="F:zinc ion binding"/>
    <property type="evidence" value="ECO:0007669"/>
    <property type="project" value="UniProtKB-UniRule"/>
</dbReference>
<dbReference type="GO" id="GO:0008616">
    <property type="term" value="P:queuosine biosynthetic process"/>
    <property type="evidence" value="ECO:0007669"/>
    <property type="project" value="UniProtKB-UniRule"/>
</dbReference>
<dbReference type="CDD" id="cd01995">
    <property type="entry name" value="QueC-like"/>
    <property type="match status" value="1"/>
</dbReference>
<dbReference type="FunFam" id="3.40.50.620:FF:000131">
    <property type="entry name" value="7-cyano-7-deazaguanine synthase"/>
    <property type="match status" value="1"/>
</dbReference>
<dbReference type="Gene3D" id="3.40.50.620">
    <property type="entry name" value="HUPs"/>
    <property type="match status" value="1"/>
</dbReference>
<dbReference type="HAMAP" id="MF_01633">
    <property type="entry name" value="QueC"/>
    <property type="match status" value="1"/>
</dbReference>
<dbReference type="InterPro" id="IPR018317">
    <property type="entry name" value="QueC"/>
</dbReference>
<dbReference type="InterPro" id="IPR014729">
    <property type="entry name" value="Rossmann-like_a/b/a_fold"/>
</dbReference>
<dbReference type="NCBIfam" id="TIGR00364">
    <property type="entry name" value="7-cyano-7-deazaguanine synthase QueC"/>
    <property type="match status" value="1"/>
</dbReference>
<dbReference type="PANTHER" id="PTHR42914">
    <property type="entry name" value="7-CYANO-7-DEAZAGUANINE SYNTHASE"/>
    <property type="match status" value="1"/>
</dbReference>
<dbReference type="PANTHER" id="PTHR42914:SF1">
    <property type="entry name" value="7-CYANO-7-DEAZAGUANINE SYNTHASE"/>
    <property type="match status" value="1"/>
</dbReference>
<dbReference type="Pfam" id="PF06508">
    <property type="entry name" value="QueC"/>
    <property type="match status" value="1"/>
</dbReference>
<dbReference type="PIRSF" id="PIRSF006293">
    <property type="entry name" value="ExsB"/>
    <property type="match status" value="1"/>
</dbReference>
<dbReference type="SUPFAM" id="SSF52402">
    <property type="entry name" value="Adenine nucleotide alpha hydrolases-like"/>
    <property type="match status" value="1"/>
</dbReference>
<gene>
    <name evidence="1" type="primary">queC</name>
    <name type="ordered locus">Gura_4046</name>
</gene>
<proteinExistence type="inferred from homology"/>
<keyword id="KW-0067">ATP-binding</keyword>
<keyword id="KW-0436">Ligase</keyword>
<keyword id="KW-0479">Metal-binding</keyword>
<keyword id="KW-0547">Nucleotide-binding</keyword>
<keyword id="KW-0671">Queuosine biosynthesis</keyword>
<keyword id="KW-1185">Reference proteome</keyword>
<keyword id="KW-0862">Zinc</keyword>
<name>QUEC_GEOUR</name>
<reference key="1">
    <citation type="submission" date="2007-05" db="EMBL/GenBank/DDBJ databases">
        <title>Complete sequence of Geobacter uraniireducens Rf4.</title>
        <authorList>
            <consortium name="US DOE Joint Genome Institute"/>
            <person name="Copeland A."/>
            <person name="Lucas S."/>
            <person name="Lapidus A."/>
            <person name="Barry K."/>
            <person name="Detter J.C."/>
            <person name="Glavina del Rio T."/>
            <person name="Hammon N."/>
            <person name="Israni S."/>
            <person name="Dalin E."/>
            <person name="Tice H."/>
            <person name="Pitluck S."/>
            <person name="Chertkov O."/>
            <person name="Brettin T."/>
            <person name="Bruce D."/>
            <person name="Han C."/>
            <person name="Schmutz J."/>
            <person name="Larimer F."/>
            <person name="Land M."/>
            <person name="Hauser L."/>
            <person name="Kyrpides N."/>
            <person name="Mikhailova N."/>
            <person name="Shelobolina E."/>
            <person name="Aklujkar M."/>
            <person name="Lovley D."/>
            <person name="Richardson P."/>
        </authorList>
    </citation>
    <scope>NUCLEOTIDE SEQUENCE [LARGE SCALE GENOMIC DNA]</scope>
    <source>
        <strain>ATCC BAA-1134 / JCM 13001 / Rf4</strain>
    </source>
</reference>
<comment type="function">
    <text evidence="1">Catalyzes the ATP-dependent conversion of 7-carboxy-7-deazaguanine (CDG) to 7-cyano-7-deazaguanine (preQ(0)).</text>
</comment>
<comment type="catalytic activity">
    <reaction evidence="1">
        <text>7-carboxy-7-deazaguanine + NH4(+) + ATP = 7-cyano-7-deazaguanine + ADP + phosphate + H2O + H(+)</text>
        <dbReference type="Rhea" id="RHEA:27982"/>
        <dbReference type="ChEBI" id="CHEBI:15377"/>
        <dbReference type="ChEBI" id="CHEBI:15378"/>
        <dbReference type="ChEBI" id="CHEBI:28938"/>
        <dbReference type="ChEBI" id="CHEBI:30616"/>
        <dbReference type="ChEBI" id="CHEBI:43474"/>
        <dbReference type="ChEBI" id="CHEBI:45075"/>
        <dbReference type="ChEBI" id="CHEBI:61036"/>
        <dbReference type="ChEBI" id="CHEBI:456216"/>
        <dbReference type="EC" id="6.3.4.20"/>
    </reaction>
</comment>
<comment type="cofactor">
    <cofactor evidence="1">
        <name>Zn(2+)</name>
        <dbReference type="ChEBI" id="CHEBI:29105"/>
    </cofactor>
    <text evidence="1">Binds 1 zinc ion per subunit.</text>
</comment>
<comment type="pathway">
    <text evidence="1">Purine metabolism; 7-cyano-7-deazaguanine biosynthesis.</text>
</comment>
<comment type="similarity">
    <text evidence="1">Belongs to the QueC family.</text>
</comment>
<sequence>MPKKAVILYSGGLDSTTCMAIAKAEGFEPYAMSFAYGQRHKAELELAKGNAKPMGAVEHMVVEFDLRKMGGSALTAEIDVPKEGVGNDIPVTYVPARNTIFLSFALGWAETLGAFDIFIGVNALDYSGYPDCRPEYIAAFETMANLATKAGVEGAGRFTIHTPLIHLTKAEIIRKGLSLGVDYGRTHSCYDPTADELACGRCDSCRLRLKGFAEAGMTDPVKYVKGEK</sequence>
<protein>
    <recommendedName>
        <fullName evidence="1">7-cyano-7-deazaguanine synthase</fullName>
        <ecNumber evidence="1">6.3.4.20</ecNumber>
    </recommendedName>
    <alternativeName>
        <fullName evidence="1">7-cyano-7-carbaguanine synthase</fullName>
    </alternativeName>
    <alternativeName>
        <fullName evidence="1">PreQ(0) synthase</fullName>
    </alternativeName>
    <alternativeName>
        <fullName evidence="1">Queuosine biosynthesis protein QueC</fullName>
    </alternativeName>
</protein>
<organism>
    <name type="scientific">Geotalea uraniireducens (strain Rf4)</name>
    <name type="common">Geobacter uraniireducens</name>
    <dbReference type="NCBI Taxonomy" id="351605"/>
    <lineage>
        <taxon>Bacteria</taxon>
        <taxon>Pseudomonadati</taxon>
        <taxon>Thermodesulfobacteriota</taxon>
        <taxon>Desulfuromonadia</taxon>
        <taxon>Geobacterales</taxon>
        <taxon>Geobacteraceae</taxon>
        <taxon>Geotalea</taxon>
    </lineage>
</organism>
<evidence type="ECO:0000255" key="1">
    <source>
        <dbReference type="HAMAP-Rule" id="MF_01633"/>
    </source>
</evidence>